<gene>
    <name evidence="19" type="primary">HSD17B3</name>
    <name type="synonym">EDH17B3</name>
    <name type="synonym">SDR12C2</name>
</gene>
<organism>
    <name type="scientific">Homo sapiens</name>
    <name type="common">Human</name>
    <dbReference type="NCBI Taxonomy" id="9606"/>
    <lineage>
        <taxon>Eukaryota</taxon>
        <taxon>Metazoa</taxon>
        <taxon>Chordata</taxon>
        <taxon>Craniata</taxon>
        <taxon>Vertebrata</taxon>
        <taxon>Euteleostomi</taxon>
        <taxon>Mammalia</taxon>
        <taxon>Eutheria</taxon>
        <taxon>Euarchontoglires</taxon>
        <taxon>Primates</taxon>
        <taxon>Haplorrhini</taxon>
        <taxon>Catarrhini</taxon>
        <taxon>Hominidae</taxon>
        <taxon>Homo</taxon>
    </lineage>
</organism>
<feature type="chain" id="PRO_0000054573" description="17-beta-hydroxysteroid dehydrogenase type 3">
    <location>
        <begin position="1"/>
        <end position="310"/>
    </location>
</feature>
<feature type="active site" description="Proton acceptor" evidence="2">
    <location>
        <position position="198"/>
    </location>
</feature>
<feature type="binding site" evidence="1">
    <location>
        <begin position="48"/>
        <end position="77"/>
    </location>
    <ligand>
        <name>NADP(+)</name>
        <dbReference type="ChEBI" id="CHEBI:58349"/>
    </ligand>
</feature>
<feature type="binding site" evidence="1">
    <location>
        <position position="185"/>
    </location>
    <ligand>
        <name>substrate</name>
    </ligand>
</feature>
<feature type="splice variant" id="VSP_056640" description="In isoform 2." evidence="13">
    <location>
        <begin position="225"/>
        <end position="274"/>
    </location>
</feature>
<feature type="sequence variant" id="VAR_014870" description="In dbSNP:rs2066480." evidence="11">
    <original>V</original>
    <variation>I</variation>
    <location>
        <position position="31"/>
    </location>
</feature>
<feature type="sequence variant" id="VAR_016067" description="In MPH; Cambridge-2; affects NADPH cofactor binding; dbSNP:rs119481078." evidence="9">
    <original>A</original>
    <variation>T</variation>
    <location>
        <position position="56"/>
    </location>
</feature>
<feature type="sequence variant" id="VAR_016068" description="In MPH; dbSNP:rs747329682." evidence="8">
    <original>S</original>
    <variation>L</variation>
    <location>
        <position position="65"/>
    </location>
</feature>
<feature type="sequence variant" id="VAR_006953" description="In MPH; Gaza; almost complete loss of testosterone 17-beta-dehydrogenase (NADP(+)) activity; dbSNP:rs119481075." evidence="7">
    <original>R</original>
    <variation>Q</variation>
    <location>
        <position position="80"/>
    </location>
</feature>
<feature type="sequence variant" id="VAR_006954" description="In MPH; dbSNP:rs119481077." evidence="10">
    <original>R</original>
    <variation>W</variation>
    <location>
        <position position="80"/>
    </location>
</feature>
<feature type="sequence variant" id="VAR_016069" description="In MPH; Cambridge-1; complete loss of activity; dbSNP:rs119481079." evidence="9">
    <original>N</original>
    <variation>S</variation>
    <location>
        <position position="130"/>
    </location>
</feature>
<feature type="sequence variant" id="VAR_075369" description="In MPH; almost complete loss of testosterone 17-beta-dehydrogenase (NADP(+)) activity; no effect on protein abundance; no effect on endoplasmic reticulum location; dbSNP:rs747724352." evidence="5">
    <original>G</original>
    <variation>R</variation>
    <location>
        <position position="133"/>
    </location>
</feature>
<feature type="sequence variant" id="VAR_016070" description="In MPH; dbSNP:rs767259718." evidence="8">
    <original>Q</original>
    <variation>P</variation>
    <location>
        <position position="176"/>
    </location>
</feature>
<feature type="sequence variant" id="VAR_006955" description="In MPH; loss of testosterone 17-beta-dehydrogenase (NADP(+)) activity; dbSNP:rs119481076." evidence="7">
    <original>A</original>
    <variation>V</variation>
    <location>
        <position position="203"/>
    </location>
</feature>
<feature type="sequence variant" id="VAR_016071" description="In MPH; dbSNP:rs372027264." evidence="8">
    <original>V</original>
    <variation>E</variation>
    <location>
        <position position="205"/>
    </location>
</feature>
<feature type="sequence variant" id="VAR_016072" description="In MPH." evidence="8">
    <original>F</original>
    <variation>I</variation>
    <location>
        <position position="208"/>
    </location>
</feature>
<feature type="sequence variant" id="VAR_016203" description="In MPH; dbSNP:rs115063639." evidence="8">
    <original>E</original>
    <variation>D</variation>
    <location>
        <position position="215"/>
    </location>
</feature>
<feature type="sequence variant" id="VAR_006956" description="In MPH; almost complete loss of testosterone 17-beta-dehydrogenase (NADP(+)) activity; dbSNP:rs28939085." evidence="7">
    <original>S</original>
    <variation>L</variation>
    <location>
        <position position="232"/>
    </location>
</feature>
<feature type="sequence variant" id="VAR_006957" description="In MPH; almost complete loss of testosterone 17-beta-dehydrogenase (NADP(+)) activity; dbSNP:rs119481074." evidence="7">
    <original>M</original>
    <variation>V</variation>
    <location>
        <position position="235"/>
    </location>
</feature>
<feature type="sequence variant" id="VAR_016073" description="In MPH; complete loss of activity; dbSNP:rs119481080." evidence="3">
    <original>C</original>
    <variation>Y</variation>
    <location>
        <position position="268"/>
    </location>
</feature>
<feature type="sequence variant" id="VAR_016074" description="In MPH; dbSNP:rs144809928." evidence="8">
    <original>P</original>
    <variation>L</variation>
    <location>
        <position position="282"/>
    </location>
</feature>
<feature type="sequence variant" id="VAR_061844" description="In dbSNP:rs2066479.">
    <original>G</original>
    <variation>C</variation>
    <location>
        <position position="289"/>
    </location>
</feature>
<feature type="sequence variant" id="VAR_061845" description="In dbSNP:rs2066479.">
    <original>G</original>
    <variation>R</variation>
    <location>
        <position position="289"/>
    </location>
</feature>
<feature type="sequence variant" id="VAR_014871" description="In dbSNP:rs2066479." evidence="9 11">
    <original>G</original>
    <variation>S</variation>
    <location>
        <position position="289"/>
    </location>
</feature>
<feature type="mutagenesis site" description="Has 70% of wild-type testosterone 17-beta-dehydrogenase (NADP(+)) activity." evidence="5">
    <original>G</original>
    <variation>A</variation>
    <location>
        <position position="133"/>
    </location>
</feature>
<feature type="mutagenesis site" description="Almost complete loss of testosterone 17-beta-dehydrogenase (NADP(+)) activity." evidence="5">
    <original>G</original>
    <variation>F</variation>
    <location>
        <position position="133"/>
    </location>
</feature>
<feature type="mutagenesis site" description="Almost complete loss of testosterone 17-beta-dehydrogenase (NADP(+)) activity." evidence="5">
    <original>G</original>
    <variation>Q</variation>
    <location>
        <position position="133"/>
    </location>
</feature>
<protein>
    <recommendedName>
        <fullName>17-beta-hydroxysteroid dehydrogenase type 3</fullName>
        <shortName evidence="12">17-beta-HSD 3</shortName>
    </recommendedName>
    <alternativeName>
        <fullName>Estradiol 17-beta-dehydrogenase 2</fullName>
        <ecNumber evidence="7">1.1.1.62</ecNumber>
    </alternativeName>
    <alternativeName>
        <fullName>Short chain dehydrogenase/reductase family 12C member 2</fullName>
    </alternativeName>
    <alternativeName>
        <fullName>Testicular 17-beta-hydroxysteroid dehydrogenase</fullName>
    </alternativeName>
    <alternativeName>
        <fullName evidence="14">Testosterone 17-beta-dehydrogenase 3</fullName>
        <ecNumber evidence="4 5 6 7">1.1.1.64</ecNumber>
    </alternativeName>
</protein>
<name>DHB3_HUMAN</name>
<proteinExistence type="evidence at protein level"/>
<accession>P37058</accession>
<accession>Q5U0Q6</accession>
<dbReference type="EC" id="1.1.1.62" evidence="7"/>
<dbReference type="EC" id="1.1.1.64" evidence="4 5 6 7"/>
<dbReference type="EMBL" id="U05659">
    <property type="protein sequence ID" value="AAC50066.1"/>
    <property type="molecule type" value="mRNA"/>
</dbReference>
<dbReference type="EMBL" id="AY341031">
    <property type="protein sequence ID" value="AAP88937.1"/>
    <property type="molecule type" value="Genomic_DNA"/>
</dbReference>
<dbReference type="EMBL" id="BT019371">
    <property type="protein sequence ID" value="AAV38178.1"/>
    <property type="molecule type" value="mRNA"/>
</dbReference>
<dbReference type="EMBL" id="AL160269">
    <property type="status" value="NOT_ANNOTATED_CDS"/>
    <property type="molecule type" value="Genomic_DNA"/>
</dbReference>
<dbReference type="EMBL" id="BC034281">
    <property type="protein sequence ID" value="AAH34281.1"/>
    <property type="molecule type" value="mRNA"/>
</dbReference>
<dbReference type="CCDS" id="CCDS6716.1">
    <molecule id="P37058-1"/>
</dbReference>
<dbReference type="PIR" id="S43928">
    <property type="entry name" value="S43928"/>
</dbReference>
<dbReference type="RefSeq" id="NP_000188.1">
    <molecule id="P37058-1"/>
    <property type="nucleotide sequence ID" value="NM_000197.2"/>
</dbReference>
<dbReference type="RefSeq" id="XP_011516920.1">
    <property type="nucleotide sequence ID" value="XM_011518618.2"/>
</dbReference>
<dbReference type="RefSeq" id="XP_011516921.1">
    <property type="nucleotide sequence ID" value="XM_011518619.2"/>
</dbReference>
<dbReference type="RefSeq" id="XP_016870160.1">
    <property type="nucleotide sequence ID" value="XM_017014671.1"/>
</dbReference>
<dbReference type="RefSeq" id="XP_016870161.1">
    <property type="nucleotide sequence ID" value="XM_017014672.1"/>
</dbReference>
<dbReference type="SMR" id="P37058"/>
<dbReference type="BioGRID" id="109526">
    <property type="interactions" value="29"/>
</dbReference>
<dbReference type="FunCoup" id="P37058">
    <property type="interactions" value="335"/>
</dbReference>
<dbReference type="IntAct" id="P37058">
    <property type="interactions" value="27"/>
</dbReference>
<dbReference type="MINT" id="P37058"/>
<dbReference type="STRING" id="9606.ENSP00000364412"/>
<dbReference type="BindingDB" id="P37058"/>
<dbReference type="ChEMBL" id="CHEMBL4234"/>
<dbReference type="DrugBank" id="DB00157">
    <property type="generic name" value="NADH"/>
</dbReference>
<dbReference type="DrugCentral" id="P37058"/>
<dbReference type="SwissLipids" id="SLP:000001270">
    <molecule id="P37058-1"/>
</dbReference>
<dbReference type="iPTMnet" id="P37058"/>
<dbReference type="PhosphoSitePlus" id="P37058"/>
<dbReference type="BioMuta" id="HSD17B3"/>
<dbReference type="DMDM" id="1169300"/>
<dbReference type="MassIVE" id="P37058"/>
<dbReference type="PaxDb" id="9606-ENSP00000364412"/>
<dbReference type="PeptideAtlas" id="P37058"/>
<dbReference type="ProteomicsDB" id="55255">
    <molecule id="P37058-1"/>
</dbReference>
<dbReference type="ProteomicsDB" id="65223"/>
<dbReference type="Antibodypedia" id="3099">
    <property type="antibodies" value="178 antibodies from 26 providers"/>
</dbReference>
<dbReference type="DNASU" id="3293"/>
<dbReference type="Ensembl" id="ENST00000375262.4">
    <molecule id="P37058-2"/>
    <property type="protein sequence ID" value="ENSP00000364411.2"/>
    <property type="gene ID" value="ENSG00000130948.10"/>
</dbReference>
<dbReference type="Ensembl" id="ENST00000375263.8">
    <molecule id="P37058-1"/>
    <property type="protein sequence ID" value="ENSP00000364412.3"/>
    <property type="gene ID" value="ENSG00000130948.10"/>
</dbReference>
<dbReference type="GeneID" id="3293"/>
<dbReference type="KEGG" id="hsa:3293"/>
<dbReference type="MANE-Select" id="ENST00000375263.8">
    <property type="protein sequence ID" value="ENSP00000364412.3"/>
    <property type="RefSeq nucleotide sequence ID" value="NM_000197.2"/>
    <property type="RefSeq protein sequence ID" value="NP_000188.1"/>
</dbReference>
<dbReference type="UCSC" id="uc010msc.1">
    <molecule id="P37058-1"/>
    <property type="organism name" value="human"/>
</dbReference>
<dbReference type="AGR" id="HGNC:5212"/>
<dbReference type="CTD" id="3293"/>
<dbReference type="DisGeNET" id="3293"/>
<dbReference type="GeneCards" id="HSD17B3"/>
<dbReference type="HGNC" id="HGNC:5212">
    <property type="gene designation" value="HSD17B3"/>
</dbReference>
<dbReference type="HPA" id="ENSG00000130948">
    <property type="expression patterns" value="Tissue enhanced (liver, testis)"/>
</dbReference>
<dbReference type="MalaCards" id="HSD17B3"/>
<dbReference type="MIM" id="264300">
    <property type="type" value="phenotype"/>
</dbReference>
<dbReference type="MIM" id="605573">
    <property type="type" value="gene"/>
</dbReference>
<dbReference type="neXtProt" id="NX_P37058"/>
<dbReference type="OpenTargets" id="ENSG00000130948"/>
<dbReference type="Orphanet" id="752">
    <property type="disease" value="46,XY difference of sex development due to 17-beta-hydroxysteroid dehydrogenase 3 deficiency"/>
</dbReference>
<dbReference type="PharmGKB" id="PA29480"/>
<dbReference type="VEuPathDB" id="HostDB:ENSG00000130948"/>
<dbReference type="eggNOG" id="KOG1014">
    <property type="taxonomic scope" value="Eukaryota"/>
</dbReference>
<dbReference type="GeneTree" id="ENSGT00940000160266"/>
<dbReference type="HOGENOM" id="CLU_010194_38_0_1"/>
<dbReference type="InParanoid" id="P37058"/>
<dbReference type="OMA" id="GNMPIPN"/>
<dbReference type="OrthoDB" id="5545019at2759"/>
<dbReference type="PAN-GO" id="P37058">
    <property type="GO annotations" value="3 GO annotations based on evolutionary models"/>
</dbReference>
<dbReference type="PhylomeDB" id="P37058"/>
<dbReference type="TreeFam" id="TF314591"/>
<dbReference type="BioCyc" id="MetaCyc:HS05461-MONOMER"/>
<dbReference type="BRENDA" id="1.1.1.51">
    <property type="organism ID" value="2681"/>
</dbReference>
<dbReference type="BRENDA" id="1.1.1.64">
    <property type="organism ID" value="2681"/>
</dbReference>
<dbReference type="PathwayCommons" id="P37058"/>
<dbReference type="Reactome" id="R-HSA-193048">
    <property type="pathway name" value="Androgen biosynthesis"/>
</dbReference>
<dbReference type="Reactome" id="R-HSA-75876">
    <property type="pathway name" value="Synthesis of very long-chain fatty acyl-CoAs"/>
</dbReference>
<dbReference type="SignaLink" id="P37058"/>
<dbReference type="UniPathway" id="UPA00367"/>
<dbReference type="BioGRID-ORCS" id="3293">
    <property type="hits" value="9 hits in 1142 CRISPR screens"/>
</dbReference>
<dbReference type="ChiTaRS" id="HSD17B3">
    <property type="organism name" value="human"/>
</dbReference>
<dbReference type="GeneWiki" id="HSD17B3_(gene)"/>
<dbReference type="GenomeRNAi" id="3293"/>
<dbReference type="Pharos" id="P37058">
    <property type="development level" value="Tchem"/>
</dbReference>
<dbReference type="PRO" id="PR:P37058"/>
<dbReference type="Proteomes" id="UP000005640">
    <property type="component" value="Chromosome 9"/>
</dbReference>
<dbReference type="RNAct" id="P37058">
    <property type="molecule type" value="protein"/>
</dbReference>
<dbReference type="Bgee" id="ENSG00000130948">
    <property type="expression patterns" value="Expressed in right testis and 92 other cell types or tissues"/>
</dbReference>
<dbReference type="ExpressionAtlas" id="P37058">
    <property type="expression patterns" value="baseline and differential"/>
</dbReference>
<dbReference type="GO" id="GO:0005783">
    <property type="term" value="C:endoplasmic reticulum"/>
    <property type="evidence" value="ECO:0000314"/>
    <property type="project" value="UniProtKB"/>
</dbReference>
<dbReference type="GO" id="GO:0005789">
    <property type="term" value="C:endoplasmic reticulum membrane"/>
    <property type="evidence" value="ECO:0000304"/>
    <property type="project" value="Reactome"/>
</dbReference>
<dbReference type="GO" id="GO:0043231">
    <property type="term" value="C:intracellular membrane-bounded organelle"/>
    <property type="evidence" value="ECO:0000304"/>
    <property type="project" value="ProtInc"/>
</dbReference>
<dbReference type="GO" id="GO:0004303">
    <property type="term" value="F:estradiol 17-beta-dehydrogenase [NAD(P)+] activity"/>
    <property type="evidence" value="ECO:0007669"/>
    <property type="project" value="UniProtKB-EC"/>
</dbReference>
<dbReference type="GO" id="GO:0047045">
    <property type="term" value="F:testosterone 17-beta-dehydrogenase (NADP+) activity"/>
    <property type="evidence" value="ECO:0000314"/>
    <property type="project" value="UniProtKB"/>
</dbReference>
<dbReference type="GO" id="GO:0030283">
    <property type="term" value="F:testosterone dehydrogenase [NAD(P)+] activity"/>
    <property type="evidence" value="ECO:0000304"/>
    <property type="project" value="Reactome"/>
</dbReference>
<dbReference type="GO" id="GO:0006702">
    <property type="term" value="P:androgen biosynthetic process"/>
    <property type="evidence" value="ECO:0000304"/>
    <property type="project" value="Reactome"/>
</dbReference>
<dbReference type="GO" id="GO:0030539">
    <property type="term" value="P:male genitalia development"/>
    <property type="evidence" value="ECO:0000304"/>
    <property type="project" value="ProtInc"/>
</dbReference>
<dbReference type="GO" id="GO:0006694">
    <property type="term" value="P:steroid biosynthetic process"/>
    <property type="evidence" value="ECO:0000318"/>
    <property type="project" value="GO_Central"/>
</dbReference>
<dbReference type="GO" id="GO:0061370">
    <property type="term" value="P:testosterone biosynthetic process"/>
    <property type="evidence" value="ECO:0007669"/>
    <property type="project" value="UniProtKB-UniPathway"/>
</dbReference>
<dbReference type="CDD" id="cd05356">
    <property type="entry name" value="17beta-HSD1_like_SDR_c"/>
    <property type="match status" value="1"/>
</dbReference>
<dbReference type="FunFam" id="3.40.50.720:FF:000137">
    <property type="entry name" value="Hydroxysteroid (17-beta) dehydrogenase 3"/>
    <property type="match status" value="1"/>
</dbReference>
<dbReference type="Gene3D" id="3.40.50.720">
    <property type="entry name" value="NAD(P)-binding Rossmann-like Domain"/>
    <property type="match status" value="1"/>
</dbReference>
<dbReference type="InterPro" id="IPR036291">
    <property type="entry name" value="NAD(P)-bd_dom_sf"/>
</dbReference>
<dbReference type="InterPro" id="IPR020904">
    <property type="entry name" value="Sc_DH/Rdtase_CS"/>
</dbReference>
<dbReference type="InterPro" id="IPR002347">
    <property type="entry name" value="SDR_fam"/>
</dbReference>
<dbReference type="InterPro" id="IPR051019">
    <property type="entry name" value="VLCFA-Steroid_DH"/>
</dbReference>
<dbReference type="PANTHER" id="PTHR43899:SF7">
    <property type="entry name" value="17-BETA-HYDROXYSTEROID DEHYDROGENASE TYPE 3"/>
    <property type="match status" value="1"/>
</dbReference>
<dbReference type="PANTHER" id="PTHR43899">
    <property type="entry name" value="RH59310P"/>
    <property type="match status" value="1"/>
</dbReference>
<dbReference type="Pfam" id="PF00106">
    <property type="entry name" value="adh_short"/>
    <property type="match status" value="1"/>
</dbReference>
<dbReference type="PIRSF" id="PIRSF000126">
    <property type="entry name" value="11-beta-HSD1"/>
    <property type="match status" value="1"/>
</dbReference>
<dbReference type="PRINTS" id="PR00081">
    <property type="entry name" value="GDHRDH"/>
</dbReference>
<dbReference type="PRINTS" id="PR00080">
    <property type="entry name" value="SDRFAMILY"/>
</dbReference>
<dbReference type="SUPFAM" id="SSF51735">
    <property type="entry name" value="NAD(P)-binding Rossmann-fold domains"/>
    <property type="match status" value="1"/>
</dbReference>
<dbReference type="PROSITE" id="PS00061">
    <property type="entry name" value="ADH_SHORT"/>
    <property type="match status" value="1"/>
</dbReference>
<evidence type="ECO:0000250" key="1"/>
<evidence type="ECO:0000255" key="2">
    <source>
        <dbReference type="PROSITE-ProRule" id="PRU10001"/>
    </source>
</evidence>
<evidence type="ECO:0000269" key="3">
    <source>
    </source>
</evidence>
<evidence type="ECO:0000269" key="4">
    <source>
    </source>
</evidence>
<evidence type="ECO:0000269" key="5">
    <source>
    </source>
</evidence>
<evidence type="ECO:0000269" key="6">
    <source>
    </source>
</evidence>
<evidence type="ECO:0000269" key="7">
    <source>
    </source>
</evidence>
<evidence type="ECO:0000269" key="8">
    <source>
    </source>
</evidence>
<evidence type="ECO:0000269" key="9">
    <source>
    </source>
</evidence>
<evidence type="ECO:0000269" key="10">
    <source>
    </source>
</evidence>
<evidence type="ECO:0000269" key="11">
    <source ref="2"/>
</evidence>
<evidence type="ECO:0000303" key="12">
    <source>
    </source>
</evidence>
<evidence type="ECO:0000303" key="13">
    <source ref="3"/>
</evidence>
<evidence type="ECO:0000305" key="14"/>
<evidence type="ECO:0000305" key="15">
    <source>
    </source>
</evidence>
<evidence type="ECO:0000305" key="16">
    <source>
    </source>
</evidence>
<evidence type="ECO:0000305" key="17">
    <source>
    </source>
</evidence>
<evidence type="ECO:0000305" key="18">
    <source>
    </source>
</evidence>
<evidence type="ECO:0000312" key="19">
    <source>
        <dbReference type="HGNC" id="HGNC:5212"/>
    </source>
</evidence>
<reference key="1">
    <citation type="journal article" date="1994" name="Nat. Genet.">
        <title>Male pseudohermaphroditism caused by mutations of testicular 17 beta-hydroxysteroid dehydrogenase 3.</title>
        <authorList>
            <person name="Geissler W.M."/>
            <person name="Davis D.L."/>
            <person name="Wu L."/>
            <person name="Bradshaw K.D."/>
            <person name="Patel S."/>
            <person name="Mendonca B.B."/>
            <person name="Elliston K.O."/>
            <person name="Wilson J.D."/>
            <person name="Russell D.W."/>
            <person name="Andersson S."/>
        </authorList>
    </citation>
    <scope>NUCLEOTIDE SEQUENCE [MRNA] (ISOFORM 1)</scope>
    <scope>VARIANTS MPH GLN-80; VAL-203; LEU-232 AND VAL-235</scope>
    <scope>FUNCTION</scope>
    <scope>CATALYTIC ACTIVITY</scope>
    <scope>CHARACTERIZATION OF VARIANTS MPH GLN-80; VAL-203; LEU-232 AND VAL-235</scope>
    <scope>TISSUE SPECIFICITY</scope>
    <scope>INVOLVEMENT IN MPH</scope>
    <source>
        <tissue>Testis</tissue>
    </source>
</reference>
<reference key="2">
    <citation type="submission" date="2003-07" db="EMBL/GenBank/DDBJ databases">
        <authorList>
            <consortium name="NIEHS SNPs program"/>
        </authorList>
    </citation>
    <scope>NUCLEOTIDE SEQUENCE [GENOMIC DNA]</scope>
    <scope>VARIANTS ILE-31 AND SER-289</scope>
</reference>
<reference key="3">
    <citation type="submission" date="2004-10" db="EMBL/GenBank/DDBJ databases">
        <title>Cloning of human full-length CDSs in BD Creator(TM) system donor vector.</title>
        <authorList>
            <person name="Kalnine N."/>
            <person name="Chen X."/>
            <person name="Rolfs A."/>
            <person name="Halleck A."/>
            <person name="Hines L."/>
            <person name="Eisenstein S."/>
            <person name="Koundinya M."/>
            <person name="Raphael J."/>
            <person name="Moreira D."/>
            <person name="Kelley T."/>
            <person name="LaBaer J."/>
            <person name="Lin Y."/>
            <person name="Phelan M."/>
            <person name="Farmer A."/>
        </authorList>
    </citation>
    <scope>NUCLEOTIDE SEQUENCE [LARGE SCALE MRNA] (ISOFORM 2)</scope>
</reference>
<reference key="4">
    <citation type="journal article" date="2004" name="Nature">
        <title>DNA sequence and analysis of human chromosome 9.</title>
        <authorList>
            <person name="Humphray S.J."/>
            <person name="Oliver K."/>
            <person name="Hunt A.R."/>
            <person name="Plumb R.W."/>
            <person name="Loveland J.E."/>
            <person name="Howe K.L."/>
            <person name="Andrews T.D."/>
            <person name="Searle S."/>
            <person name="Hunt S.E."/>
            <person name="Scott C.E."/>
            <person name="Jones M.C."/>
            <person name="Ainscough R."/>
            <person name="Almeida J.P."/>
            <person name="Ambrose K.D."/>
            <person name="Ashwell R.I.S."/>
            <person name="Babbage A.K."/>
            <person name="Babbage S."/>
            <person name="Bagguley C.L."/>
            <person name="Bailey J."/>
            <person name="Banerjee R."/>
            <person name="Barker D.J."/>
            <person name="Barlow K.F."/>
            <person name="Bates K."/>
            <person name="Beasley H."/>
            <person name="Beasley O."/>
            <person name="Bird C.P."/>
            <person name="Bray-Allen S."/>
            <person name="Brown A.J."/>
            <person name="Brown J.Y."/>
            <person name="Burford D."/>
            <person name="Burrill W."/>
            <person name="Burton J."/>
            <person name="Carder C."/>
            <person name="Carter N.P."/>
            <person name="Chapman J.C."/>
            <person name="Chen Y."/>
            <person name="Clarke G."/>
            <person name="Clark S.Y."/>
            <person name="Clee C.M."/>
            <person name="Clegg S."/>
            <person name="Collier R.E."/>
            <person name="Corby N."/>
            <person name="Crosier M."/>
            <person name="Cummings A.T."/>
            <person name="Davies J."/>
            <person name="Dhami P."/>
            <person name="Dunn M."/>
            <person name="Dutta I."/>
            <person name="Dyer L.W."/>
            <person name="Earthrowl M.E."/>
            <person name="Faulkner L."/>
            <person name="Fleming C.J."/>
            <person name="Frankish A."/>
            <person name="Frankland J.A."/>
            <person name="French L."/>
            <person name="Fricker D.G."/>
            <person name="Garner P."/>
            <person name="Garnett J."/>
            <person name="Ghori J."/>
            <person name="Gilbert J.G.R."/>
            <person name="Glison C."/>
            <person name="Grafham D.V."/>
            <person name="Gribble S."/>
            <person name="Griffiths C."/>
            <person name="Griffiths-Jones S."/>
            <person name="Grocock R."/>
            <person name="Guy J."/>
            <person name="Hall R.E."/>
            <person name="Hammond S."/>
            <person name="Harley J.L."/>
            <person name="Harrison E.S.I."/>
            <person name="Hart E.A."/>
            <person name="Heath P.D."/>
            <person name="Henderson C.D."/>
            <person name="Hopkins B.L."/>
            <person name="Howard P.J."/>
            <person name="Howden P.J."/>
            <person name="Huckle E."/>
            <person name="Johnson C."/>
            <person name="Johnson D."/>
            <person name="Joy A.A."/>
            <person name="Kay M."/>
            <person name="Keenan S."/>
            <person name="Kershaw J.K."/>
            <person name="Kimberley A.M."/>
            <person name="King A."/>
            <person name="Knights A."/>
            <person name="Laird G.K."/>
            <person name="Langford C."/>
            <person name="Lawlor S."/>
            <person name="Leongamornlert D.A."/>
            <person name="Leversha M."/>
            <person name="Lloyd C."/>
            <person name="Lloyd D.M."/>
            <person name="Lovell J."/>
            <person name="Martin S."/>
            <person name="Mashreghi-Mohammadi M."/>
            <person name="Matthews L."/>
            <person name="McLaren S."/>
            <person name="McLay K.E."/>
            <person name="McMurray A."/>
            <person name="Milne S."/>
            <person name="Nickerson T."/>
            <person name="Nisbett J."/>
            <person name="Nordsiek G."/>
            <person name="Pearce A.V."/>
            <person name="Peck A.I."/>
            <person name="Porter K.M."/>
            <person name="Pandian R."/>
            <person name="Pelan S."/>
            <person name="Phillimore B."/>
            <person name="Povey S."/>
            <person name="Ramsey Y."/>
            <person name="Rand V."/>
            <person name="Scharfe M."/>
            <person name="Sehra H.K."/>
            <person name="Shownkeen R."/>
            <person name="Sims S.K."/>
            <person name="Skuce C.D."/>
            <person name="Smith M."/>
            <person name="Steward C.A."/>
            <person name="Swarbreck D."/>
            <person name="Sycamore N."/>
            <person name="Tester J."/>
            <person name="Thorpe A."/>
            <person name="Tracey A."/>
            <person name="Tromans A."/>
            <person name="Thomas D.W."/>
            <person name="Wall M."/>
            <person name="Wallis J.M."/>
            <person name="West A.P."/>
            <person name="Whitehead S.L."/>
            <person name="Willey D.L."/>
            <person name="Williams S.A."/>
            <person name="Wilming L."/>
            <person name="Wray P.W."/>
            <person name="Young L."/>
            <person name="Ashurst J.L."/>
            <person name="Coulson A."/>
            <person name="Blocker H."/>
            <person name="Durbin R.M."/>
            <person name="Sulston J.E."/>
            <person name="Hubbard T."/>
            <person name="Jackson M.J."/>
            <person name="Bentley D.R."/>
            <person name="Beck S."/>
            <person name="Rogers J."/>
            <person name="Dunham I."/>
        </authorList>
    </citation>
    <scope>NUCLEOTIDE SEQUENCE [LARGE SCALE GENOMIC DNA]</scope>
</reference>
<reference key="5">
    <citation type="journal article" date="2004" name="Genome Res.">
        <title>The status, quality, and expansion of the NIH full-length cDNA project: the Mammalian Gene Collection (MGC).</title>
        <authorList>
            <consortium name="The MGC Project Team"/>
        </authorList>
    </citation>
    <scope>NUCLEOTIDE SEQUENCE [LARGE SCALE MRNA] (ISOFORM 1)</scope>
    <source>
        <tissue>Brain</tissue>
    </source>
</reference>
<reference key="6">
    <citation type="journal article" date="2005" name="J. Mol. Endocrinol.">
        <title>Androgen metabolism via 17beta-hydroxysteroid dehydrogenase type 3 in mammalian and non-mammalian vertebrates: comparison of the human and the zebrafish enzyme.</title>
        <authorList>
            <person name="Mindnich R."/>
            <person name="Haller F."/>
            <person name="Halbach F."/>
            <person name="Moeller G."/>
            <person name="Hrabe de Angelis M."/>
            <person name="Adamski J."/>
        </authorList>
    </citation>
    <scope>CATALYTIC ACTIVITY</scope>
    <scope>SUBCELLULAR LOCATION</scope>
    <scope>FUNCTION</scope>
</reference>
<reference key="7">
    <citation type="journal article" date="2017" name="J. Endocrinol.">
        <title>Absence of 11-keto reduction of cortisone and 11-ketotestosterone in the model organism zebrafish.</title>
        <authorList>
            <person name="Tsachaki M."/>
            <person name="Meyer A."/>
            <person name="Weger B."/>
            <person name="Kratschmar D.V."/>
            <person name="Tokarz J."/>
            <person name="Adamski J."/>
            <person name="Belting H.G."/>
            <person name="Affolter M."/>
            <person name="Dickmeis T."/>
            <person name="Odermatt A."/>
        </authorList>
    </citation>
    <scope>CATALYTIC ACTIVITY</scope>
    <scope>FUNCTION</scope>
</reference>
<reference key="8">
    <citation type="journal article" date="1996" name="J. Clin. Endocrinol. Metab.">
        <title>Molecular genetics and pathophysiology of 17 beta-hydroxysteroid dehydrogenase 3 deficiency.</title>
        <authorList>
            <person name="Andersson S."/>
            <person name="Geissler W.M."/>
            <person name="Wu L."/>
            <person name="Davis D.L."/>
            <person name="Grumbach M.M."/>
            <person name="New M.I."/>
            <person name="Schwarz H.P."/>
            <person name="Blethen S.L."/>
            <person name="Mendonca B.B."/>
            <person name="Bloise W."/>
            <person name="Witchel S.F."/>
            <person name="Cutler G.B. Jr."/>
            <person name="Griffin J.E."/>
            <person name="Wilson J.D."/>
            <person name="Russel D.W."/>
        </authorList>
    </citation>
    <scope>INVOLVEMENT IN MPH</scope>
    <scope>VARIANTS MPH LEU-65; PRO-176; GLU-205; ILE-208; ASP-215 AND LEU-282</scope>
</reference>
<reference key="9">
    <citation type="journal article" date="1998" name="Eur. J. Endocrinol.">
        <title>A novel missense (R80W) mutation in 17-beta-hydroxysteroid dehydrogenase type 3 gene associated with male pseudohermaphroditism.</title>
        <authorList>
            <person name="Bilbao J.R."/>
            <person name="Loridan L."/>
            <person name="Audi L."/>
            <person name="Gonzalo E."/>
            <person name="Castano L."/>
        </authorList>
    </citation>
    <scope>INVOLVEMENT IN MPH</scope>
    <scope>VARIANT MPH TRP-80</scope>
</reference>
<reference key="10">
    <citation type="journal article" date="1998" name="J. Clin. Endocrinol. Metab.">
        <title>Deleterious missense mutations and silent polymorphism in the human 17beta-hydroxysteroid dehydrogenase 3 gene (HSD17B3).</title>
        <authorList>
            <person name="Moghrabi N."/>
            <person name="Hughes I.A."/>
            <person name="Dunaif A."/>
            <person name="Andersson S."/>
        </authorList>
    </citation>
    <scope>INVOLVEMENT IN MPH</scope>
    <scope>VARIANTS MPH THR-56 AND SER-130</scope>
    <scope>VARIANT SER-289</scope>
</reference>
<reference key="11">
    <citation type="journal article" date="2001" name="J. Clin. Endocrinol. Metab.">
        <title>Substitution mutation C268Y causes 17 beta-hydroxysteroid dehydrogenase 3 deficiency.</title>
        <authorList>
            <person name="Lindqvist A."/>
            <person name="Hughes I.A."/>
            <person name="Andersson S."/>
        </authorList>
    </citation>
    <scope>INVOLVEMENT IN MPH</scope>
    <scope>VARIANT MPH TYR-268</scope>
</reference>
<reference key="12">
    <citation type="journal article" date="2016" name="J. Steroid Biochem. Mol. Biol.">
        <title>Biochemical analyses and molecular modeling explain the functional loss of 17beta-hydroxysteroid dehydrogenase 3 mutant G133R in three Tunisian patients with 46, XY Disorders of Sex Development.</title>
        <authorList>
            <person name="Engeli R.T."/>
            <person name="Rhouma B.B."/>
            <person name="Sager C.P."/>
            <person name="Tsachaki M."/>
            <person name="Birk J."/>
            <person name="Fakhfakh F."/>
            <person name="Keskes L."/>
            <person name="Belguith N."/>
            <person name="Odermatt A."/>
        </authorList>
    </citation>
    <scope>VARIANT MPH ARG-133</scope>
    <scope>CHARACTERIZATION OF VARIANT MPH ARG-133</scope>
    <scope>FUNCTION</scope>
    <scope>CATALYTIC ACTIVITY</scope>
    <scope>SUBCELLULAR LOCATION</scope>
    <scope>MUTAGENESIS OF GLY-133</scope>
</reference>
<comment type="function">
    <text evidence="4 5 6 7">Catalyzes the conversion of 17-oxosteroids to 17beta-hydroxysteroids (PubMed:16216911, PubMed:26545797, PubMed:27927697, PubMed:8075637). Favors the reduction of androstenedione to testosterone (PubMed:16216911, PubMed:26545797, PubMed:27927697). Testosterone is the key androgen driving male development and function (PubMed:8075637). Uses NADPH while the two other EDH17B enzymes use NADH (PubMed:16216911, PubMed:26545797, PubMed:8075637). Androgens such as epiandrosterone, dehydroepiandrosterone, androsterone and androstanedione are accepted as substrates and reduced at C-17 (PubMed:16216911). Can reduce 11-ketoandrostenedione as well as 11beta-hydroxyandrostenedione at C-17 to the respective testosterone forms (PubMed:16216911, PubMed:27927697).</text>
</comment>
<comment type="catalytic activity">
    <reaction evidence="4 5 6 7">
        <text>a 17beta-hydroxy steroid + NADP(+) = a 17-oxo steroid + NADPH + H(+)</text>
        <dbReference type="Rhea" id="RHEA:69284"/>
        <dbReference type="ChEBI" id="CHEBI:15378"/>
        <dbReference type="ChEBI" id="CHEBI:19168"/>
        <dbReference type="ChEBI" id="CHEBI:35343"/>
        <dbReference type="ChEBI" id="CHEBI:57783"/>
        <dbReference type="ChEBI" id="CHEBI:58349"/>
    </reaction>
    <physiologicalReaction direction="right-to-left" evidence="5 15 17 18">
        <dbReference type="Rhea" id="RHEA:69286"/>
    </physiologicalReaction>
</comment>
<comment type="catalytic activity">
    <reaction evidence="4 5 6 7">
        <text>testosterone + NADP(+) = androst-4-ene-3,17-dione + NADPH + H(+)</text>
        <dbReference type="Rhea" id="RHEA:14981"/>
        <dbReference type="ChEBI" id="CHEBI:15378"/>
        <dbReference type="ChEBI" id="CHEBI:16422"/>
        <dbReference type="ChEBI" id="CHEBI:17347"/>
        <dbReference type="ChEBI" id="CHEBI:57783"/>
        <dbReference type="ChEBI" id="CHEBI:58349"/>
        <dbReference type="EC" id="1.1.1.64"/>
    </reaction>
    <physiologicalReaction direction="right-to-left" evidence="5 15 17 18">
        <dbReference type="Rhea" id="RHEA:14983"/>
    </physiologicalReaction>
</comment>
<comment type="catalytic activity">
    <reaction evidence="7">
        <text>17beta-estradiol + NADP(+) = estrone + NADPH + H(+)</text>
        <dbReference type="Rhea" id="RHEA:24616"/>
        <dbReference type="ChEBI" id="CHEBI:15378"/>
        <dbReference type="ChEBI" id="CHEBI:16469"/>
        <dbReference type="ChEBI" id="CHEBI:17263"/>
        <dbReference type="ChEBI" id="CHEBI:57783"/>
        <dbReference type="ChEBI" id="CHEBI:58349"/>
        <dbReference type="EC" id="1.1.1.62"/>
    </reaction>
    <physiologicalReaction direction="right-to-left" evidence="18">
        <dbReference type="Rhea" id="RHEA:24618"/>
    </physiologicalReaction>
</comment>
<comment type="catalytic activity">
    <reaction evidence="4 7">
        <text>3beta-hydroxyandrost-5-en-17-one + NADPH + H(+) = androst-5-en-3beta,17beta-diol + NADP(+)</text>
        <dbReference type="Rhea" id="RHEA:46628"/>
        <dbReference type="ChEBI" id="CHEBI:2710"/>
        <dbReference type="ChEBI" id="CHEBI:15378"/>
        <dbReference type="ChEBI" id="CHEBI:28689"/>
        <dbReference type="ChEBI" id="CHEBI:57783"/>
        <dbReference type="ChEBI" id="CHEBI:58349"/>
    </reaction>
    <physiologicalReaction direction="left-to-right" evidence="15 18">
        <dbReference type="Rhea" id="RHEA:46629"/>
    </physiologicalReaction>
</comment>
<comment type="catalytic activity">
    <reaction evidence="4">
        <text>17beta-hydroxy-5alpha-androstan-3-one + NADP(+) = 5alpha-androstan-3,17-dione + NADPH + H(+)</text>
        <dbReference type="Rhea" id="RHEA:42120"/>
        <dbReference type="ChEBI" id="CHEBI:15378"/>
        <dbReference type="ChEBI" id="CHEBI:15994"/>
        <dbReference type="ChEBI" id="CHEBI:16330"/>
        <dbReference type="ChEBI" id="CHEBI:57783"/>
        <dbReference type="ChEBI" id="CHEBI:58349"/>
    </reaction>
    <physiologicalReaction direction="right-to-left" evidence="15">
        <dbReference type="Rhea" id="RHEA:42122"/>
    </physiologicalReaction>
</comment>
<comment type="catalytic activity">
    <reaction evidence="4">
        <text>androsterone + NADPH + H(+) = 5alpha-androstane-3alpha,17beta-diol + NADP(+)</text>
        <dbReference type="Rhea" id="RHEA:42156"/>
        <dbReference type="ChEBI" id="CHEBI:15378"/>
        <dbReference type="ChEBI" id="CHEBI:16032"/>
        <dbReference type="ChEBI" id="CHEBI:36713"/>
        <dbReference type="ChEBI" id="CHEBI:57783"/>
        <dbReference type="ChEBI" id="CHEBI:58349"/>
    </reaction>
    <physiologicalReaction direction="left-to-right" evidence="15">
        <dbReference type="Rhea" id="RHEA:42157"/>
    </physiologicalReaction>
</comment>
<comment type="catalytic activity">
    <reaction evidence="4">
        <text>3beta-hydroxy-5alpha-androstan-17-one + NADPH + H(+) = 5alpha-androstane-3beta,17beta-diol + NADP(+)</text>
        <dbReference type="Rhea" id="RHEA:53480"/>
        <dbReference type="ChEBI" id="CHEBI:15378"/>
        <dbReference type="ChEBI" id="CHEBI:18329"/>
        <dbReference type="ChEBI" id="CHEBI:57783"/>
        <dbReference type="ChEBI" id="CHEBI:58349"/>
        <dbReference type="ChEBI" id="CHEBI:541975"/>
    </reaction>
    <physiologicalReaction direction="left-to-right" evidence="15">
        <dbReference type="Rhea" id="RHEA:53481"/>
    </physiologicalReaction>
</comment>
<comment type="catalytic activity">
    <reaction evidence="4 6">
        <text>androst-4-ene-3,11,17-trione + NADPH + H(+) = 17beta-hydroxyandrost-4-ene-3,11-dione + NADP(+)</text>
        <dbReference type="Rhea" id="RHEA:53484"/>
        <dbReference type="ChEBI" id="CHEBI:2495"/>
        <dbReference type="ChEBI" id="CHEBI:15378"/>
        <dbReference type="ChEBI" id="CHEBI:34133"/>
        <dbReference type="ChEBI" id="CHEBI:57783"/>
        <dbReference type="ChEBI" id="CHEBI:58349"/>
    </reaction>
    <physiologicalReaction direction="left-to-right" evidence="15 17">
        <dbReference type="Rhea" id="RHEA:53485"/>
    </physiologicalReaction>
</comment>
<comment type="catalytic activity">
    <reaction evidence="4">
        <text>11beta-hydroxyandrost-4-ene-3,17-dione + NADPH + H(+) = 11beta,17beta-dihydroxyandrost-4-ene-3-one + NADP(+)</text>
        <dbReference type="Rhea" id="RHEA:53488"/>
        <dbReference type="ChEBI" id="CHEBI:15378"/>
        <dbReference type="ChEBI" id="CHEBI:27967"/>
        <dbReference type="ChEBI" id="CHEBI:57783"/>
        <dbReference type="ChEBI" id="CHEBI:58349"/>
        <dbReference type="ChEBI" id="CHEBI:81481"/>
    </reaction>
    <physiologicalReaction direction="left-to-right" evidence="15">
        <dbReference type="Rhea" id="RHEA:53489"/>
    </physiologicalReaction>
</comment>
<comment type="pathway">
    <text evidence="15 16">Hormone biosynthesis; testosterone biosynthesis.</text>
</comment>
<comment type="pathway">
    <text evidence="14">Steroid metabolism.</text>
</comment>
<comment type="interaction">
    <interactant intactId="EBI-2932988">
        <id>P37058</id>
    </interactant>
    <interactant intactId="EBI-746987">
        <id>P62166</id>
        <label>NCS1</label>
    </interactant>
    <organismsDiffer>false</organismsDiffer>
    <experiments>3</experiments>
</comment>
<comment type="subcellular location">
    <subcellularLocation>
        <location evidence="4 5">Endoplasmic reticulum</location>
    </subcellularLocation>
</comment>
<comment type="alternative products">
    <event type="alternative splicing"/>
    <isoform>
        <id>P37058-1</id>
        <name>1</name>
        <sequence type="displayed"/>
    </isoform>
    <isoform>
        <id>P37058-2</id>
        <name>2</name>
        <sequence type="described" ref="VSP_056640"/>
    </isoform>
</comment>
<comment type="tissue specificity">
    <text evidence="7">Testis.</text>
</comment>
<comment type="disease" evidence="3 5 7 8 9 10">
    <disease id="DI-01928">
        <name>Male pseudohermaphrodism with gynecomastia</name>
        <acronym>MPH</acronym>
        <description>An autosomal recessive disorder that manifests, in males, as undermasculinization characterized by hypoplastic-to-normal internal genitalia (epididymis, vas deferens, seminal vesicles, and ejaculatory ducts) but female external genitalia and the absence of a prostate. This phenotype is caused by inadequate testicular synthesis of testosterone, which, in turn, results in insufficient formation of dihydrotestosterone in the anlage of the external genitalia and prostate during fetal development. At the expected time of puberty, there is a marked increase in plasma leuteinizing hormone and, consequently, in testicular secretion of androstenedione. Hence, a diagnostic hallmark of this disorder is a decreased plasma testosterone-to-androstenedione ratio. Significant amounts of the circulating androstenedione are, however, converted to testosterone, in peripheral tissues, thereby causing virilization.</description>
        <dbReference type="MIM" id="264300"/>
    </disease>
    <text>The disease is caused by variants affecting the gene represented in this entry.</text>
</comment>
<comment type="similarity">
    <text evidence="14">Belongs to the short-chain dehydrogenases/reductases (SDR) family. 17-beta-HSD 3 subfamily.</text>
</comment>
<keyword id="KW-0025">Alternative splicing</keyword>
<keyword id="KW-0225">Disease variant</keyword>
<keyword id="KW-0256">Endoplasmic reticulum</keyword>
<keyword id="KW-0444">Lipid biosynthesis</keyword>
<keyword id="KW-0443">Lipid metabolism</keyword>
<keyword id="KW-0521">NADP</keyword>
<keyword id="KW-0560">Oxidoreductase</keyword>
<keyword id="KW-1267">Proteomics identification</keyword>
<keyword id="KW-0657">Pseudohermaphroditism</keyword>
<keyword id="KW-1185">Reference proteome</keyword>
<keyword id="KW-0752">Steroid biosynthesis</keyword>
<sequence length="310" mass="34516">MGDVLEQFFILTGLLVCLACLAKCVRFSRCVLLNYWKVLPKSFLRSMGQWAVITGAGDGIGKAYSFELAKRGLNVVLISRTLEKLEAIATEIERTTGRSVKIIQADFTKDDIYEHIKEKLAGLEIGILVNNVGMLPNLLPSHFLNAPDEIQSLIHCNITSVVKMTQLILKHMESRQKGLILNISSGIALFPWPLYSMYSASKAFVCAFSKALQEEYKAKEVIIQVLTPYAVSTAMTKYLNTNVITKTADEFVKESLNYVTIGGETCGCLAHEILAGFLSLIPAWAFYSGAFQRLLLTHYVAYLKLNTKVR</sequence>